<protein>
    <recommendedName>
        <fullName evidence="1">4-diphosphocytidyl-2-C-methyl-D-erythritol kinase</fullName>
        <shortName evidence="1">CMK</shortName>
        <ecNumber evidence="1">2.7.1.148</ecNumber>
    </recommendedName>
    <alternativeName>
        <fullName evidence="1">4-(cytidine-5'-diphospho)-2-C-methyl-D-erythritol kinase</fullName>
    </alternativeName>
</protein>
<evidence type="ECO:0000255" key="1">
    <source>
        <dbReference type="HAMAP-Rule" id="MF_00061"/>
    </source>
</evidence>
<sequence length="291" mass="32310">MKQVWASPAKLNVFLYITGQQPDGYHQLQTLFIFLNYGDEITIVPRQDEQILLMTPIPNVSHDQNLVVRAARLLQQQPGKKSQTGSLPRGAEISIKKYVPIGGGLGGGSSNAATVLLALNHLWGFNFSEDELAVLGLKLGADVPVFIYGNSAFAEGVGDRLQPVEWPLKWYLVLYSDVKISTKMIFSDPELKRNTPRRSLSTLLAAPYHNDCEPVVRKRFPKVDELLSWISQYAPARLTGTGACIFSEFNTESEARDILEKVPKGIYGFVASSTQISPLKKDFLDVRSQIS</sequence>
<accession>C4K7Z0</accession>
<name>ISPE_HAMD5</name>
<gene>
    <name evidence="1" type="primary">ispE</name>
    <name type="ordered locus">HDEF_2120</name>
</gene>
<organism>
    <name type="scientific">Hamiltonella defensa subsp. Acyrthosiphon pisum (strain 5AT)</name>
    <dbReference type="NCBI Taxonomy" id="572265"/>
    <lineage>
        <taxon>Bacteria</taxon>
        <taxon>Pseudomonadati</taxon>
        <taxon>Pseudomonadota</taxon>
        <taxon>Gammaproteobacteria</taxon>
        <taxon>Enterobacterales</taxon>
        <taxon>Enterobacteriaceae</taxon>
        <taxon>aphid secondary symbionts</taxon>
        <taxon>Candidatus Hamiltonella</taxon>
    </lineage>
</organism>
<feature type="chain" id="PRO_1000202382" description="4-diphosphocytidyl-2-C-methyl-D-erythritol kinase">
    <location>
        <begin position="1"/>
        <end position="291"/>
    </location>
</feature>
<feature type="active site" evidence="1">
    <location>
        <position position="10"/>
    </location>
</feature>
<feature type="active site" evidence="1">
    <location>
        <position position="142"/>
    </location>
</feature>
<feature type="binding site" evidence="1">
    <location>
        <begin position="100"/>
        <end position="110"/>
    </location>
    <ligand>
        <name>ATP</name>
        <dbReference type="ChEBI" id="CHEBI:30616"/>
    </ligand>
</feature>
<proteinExistence type="inferred from homology"/>
<keyword id="KW-0067">ATP-binding</keyword>
<keyword id="KW-0414">Isoprene biosynthesis</keyword>
<keyword id="KW-0418">Kinase</keyword>
<keyword id="KW-0547">Nucleotide-binding</keyword>
<keyword id="KW-0808">Transferase</keyword>
<reference key="1">
    <citation type="journal article" date="2009" name="Proc. Natl. Acad. Sci. U.S.A.">
        <title>Hamiltonella defensa, genome evolution of protective bacterial endosymbiont from pathogenic ancestors.</title>
        <authorList>
            <person name="Degnan P.H."/>
            <person name="Yu Y."/>
            <person name="Sisneros N."/>
            <person name="Wing R.A."/>
            <person name="Moran N.A."/>
        </authorList>
    </citation>
    <scope>NUCLEOTIDE SEQUENCE [LARGE SCALE GENOMIC DNA]</scope>
    <source>
        <strain>5AT</strain>
    </source>
</reference>
<comment type="function">
    <text evidence="1">Catalyzes the phosphorylation of the position 2 hydroxy group of 4-diphosphocytidyl-2C-methyl-D-erythritol.</text>
</comment>
<comment type="catalytic activity">
    <reaction evidence="1">
        <text>4-CDP-2-C-methyl-D-erythritol + ATP = 4-CDP-2-C-methyl-D-erythritol 2-phosphate + ADP + H(+)</text>
        <dbReference type="Rhea" id="RHEA:18437"/>
        <dbReference type="ChEBI" id="CHEBI:15378"/>
        <dbReference type="ChEBI" id="CHEBI:30616"/>
        <dbReference type="ChEBI" id="CHEBI:57823"/>
        <dbReference type="ChEBI" id="CHEBI:57919"/>
        <dbReference type="ChEBI" id="CHEBI:456216"/>
        <dbReference type="EC" id="2.7.1.148"/>
    </reaction>
</comment>
<comment type="pathway">
    <text evidence="1">Isoprenoid biosynthesis; isopentenyl diphosphate biosynthesis via DXP pathway; isopentenyl diphosphate from 1-deoxy-D-xylulose 5-phosphate: step 3/6.</text>
</comment>
<comment type="subunit">
    <text evidence="1">Homodimer.</text>
</comment>
<comment type="similarity">
    <text evidence="1">Belongs to the GHMP kinase family. IspE subfamily.</text>
</comment>
<dbReference type="EC" id="2.7.1.148" evidence="1"/>
<dbReference type="EMBL" id="CP001277">
    <property type="protein sequence ID" value="ACQ68683.1"/>
    <property type="molecule type" value="Genomic_DNA"/>
</dbReference>
<dbReference type="RefSeq" id="WP_015874428.1">
    <property type="nucleotide sequence ID" value="NC_012751.1"/>
</dbReference>
<dbReference type="SMR" id="C4K7Z0"/>
<dbReference type="STRING" id="572265.HDEF_2120"/>
<dbReference type="GeneID" id="66261658"/>
<dbReference type="KEGG" id="hde:HDEF_2120"/>
<dbReference type="eggNOG" id="COG1947">
    <property type="taxonomic scope" value="Bacteria"/>
</dbReference>
<dbReference type="HOGENOM" id="CLU_053057_3_0_6"/>
<dbReference type="UniPathway" id="UPA00056">
    <property type="reaction ID" value="UER00094"/>
</dbReference>
<dbReference type="Proteomes" id="UP000002334">
    <property type="component" value="Chromosome"/>
</dbReference>
<dbReference type="GO" id="GO:0050515">
    <property type="term" value="F:4-(cytidine 5'-diphospho)-2-C-methyl-D-erythritol kinase activity"/>
    <property type="evidence" value="ECO:0007669"/>
    <property type="project" value="UniProtKB-UniRule"/>
</dbReference>
<dbReference type="GO" id="GO:0005524">
    <property type="term" value="F:ATP binding"/>
    <property type="evidence" value="ECO:0007669"/>
    <property type="project" value="UniProtKB-UniRule"/>
</dbReference>
<dbReference type="GO" id="GO:0019288">
    <property type="term" value="P:isopentenyl diphosphate biosynthetic process, methylerythritol 4-phosphate pathway"/>
    <property type="evidence" value="ECO:0007669"/>
    <property type="project" value="UniProtKB-UniRule"/>
</dbReference>
<dbReference type="GO" id="GO:0016114">
    <property type="term" value="P:terpenoid biosynthetic process"/>
    <property type="evidence" value="ECO:0007669"/>
    <property type="project" value="InterPro"/>
</dbReference>
<dbReference type="Gene3D" id="3.30.230.10">
    <property type="match status" value="1"/>
</dbReference>
<dbReference type="Gene3D" id="3.30.70.890">
    <property type="entry name" value="GHMP kinase, C-terminal domain"/>
    <property type="match status" value="1"/>
</dbReference>
<dbReference type="HAMAP" id="MF_00061">
    <property type="entry name" value="IspE"/>
    <property type="match status" value="1"/>
</dbReference>
<dbReference type="InterPro" id="IPR013750">
    <property type="entry name" value="GHMP_kinase_C_dom"/>
</dbReference>
<dbReference type="InterPro" id="IPR036554">
    <property type="entry name" value="GHMP_kinase_C_sf"/>
</dbReference>
<dbReference type="InterPro" id="IPR006204">
    <property type="entry name" value="GHMP_kinase_N_dom"/>
</dbReference>
<dbReference type="InterPro" id="IPR004424">
    <property type="entry name" value="IspE"/>
</dbReference>
<dbReference type="InterPro" id="IPR020568">
    <property type="entry name" value="Ribosomal_Su5_D2-typ_SF"/>
</dbReference>
<dbReference type="InterPro" id="IPR014721">
    <property type="entry name" value="Ribsml_uS5_D2-typ_fold_subgr"/>
</dbReference>
<dbReference type="NCBIfam" id="TIGR00154">
    <property type="entry name" value="ispE"/>
    <property type="match status" value="1"/>
</dbReference>
<dbReference type="PANTHER" id="PTHR43527">
    <property type="entry name" value="4-DIPHOSPHOCYTIDYL-2-C-METHYL-D-ERYTHRITOL KINASE, CHLOROPLASTIC"/>
    <property type="match status" value="1"/>
</dbReference>
<dbReference type="PANTHER" id="PTHR43527:SF2">
    <property type="entry name" value="4-DIPHOSPHOCYTIDYL-2-C-METHYL-D-ERYTHRITOL KINASE, CHLOROPLASTIC"/>
    <property type="match status" value="1"/>
</dbReference>
<dbReference type="Pfam" id="PF08544">
    <property type="entry name" value="GHMP_kinases_C"/>
    <property type="match status" value="1"/>
</dbReference>
<dbReference type="Pfam" id="PF00288">
    <property type="entry name" value="GHMP_kinases_N"/>
    <property type="match status" value="1"/>
</dbReference>
<dbReference type="PIRSF" id="PIRSF010376">
    <property type="entry name" value="IspE"/>
    <property type="match status" value="1"/>
</dbReference>
<dbReference type="SUPFAM" id="SSF55060">
    <property type="entry name" value="GHMP Kinase, C-terminal domain"/>
    <property type="match status" value="1"/>
</dbReference>
<dbReference type="SUPFAM" id="SSF54211">
    <property type="entry name" value="Ribosomal protein S5 domain 2-like"/>
    <property type="match status" value="1"/>
</dbReference>